<reference evidence="5" key="1">
    <citation type="journal article" date="2000" name="J. Biol. Chem.">
        <title>A new subunit of cytochrome b6f complex undergoes reversible phosphorylation upon state transition.</title>
        <authorList>
            <person name="Hamel P."/>
            <person name="Olive J."/>
            <person name="Pierre Y."/>
            <person name="Wollman F.-A."/>
            <person name="de Vitry C."/>
        </authorList>
    </citation>
    <scope>NUCLEOTIDE SEQUENCE [MRNA]</scope>
    <scope>PROTEIN SEQUENCE OF 52-86</scope>
    <scope>SUBCELLULAR LOCATION</scope>
    <scope>PHOSPHORYLATION</scope>
</reference>
<reference evidence="5" key="2">
    <citation type="journal article" date="1986" name="Biochim. Biophys. Acta">
        <title>Studies on the cytochrome b6/f complex. I. Characterisation of the complex subunits in Chamydomonas reinhardtii.</title>
        <authorList>
            <person name="Lemaire C."/>
            <person name="Girard-Bascou J."/>
            <person name="Wollman F.-A."/>
            <person name="Bennoun P."/>
        </authorList>
    </citation>
    <scope>SUBCELLULAR LOCATION</scope>
</reference>
<organism evidence="6">
    <name type="scientific">Chlamydomonas reinhardtii</name>
    <name type="common">Chlamydomonas smithii</name>
    <dbReference type="NCBI Taxonomy" id="3055"/>
    <lineage>
        <taxon>Eukaryota</taxon>
        <taxon>Viridiplantae</taxon>
        <taxon>Chlorophyta</taxon>
        <taxon>core chlorophytes</taxon>
        <taxon>Chlorophyceae</taxon>
        <taxon>CS clade</taxon>
        <taxon>Chlamydomonadales</taxon>
        <taxon>Chlamydomonadaceae</taxon>
        <taxon>Chlamydomonas</taxon>
    </lineage>
</organism>
<protein>
    <recommendedName>
        <fullName>Cytochrome b6-f complex subunit petO, chloroplastic</fullName>
    </recommendedName>
    <alternativeName>
        <fullName>Cytochrome b6-f complex subunit V</fullName>
        <shortName>suV</shortName>
    </alternativeName>
    <alternativeName>
        <fullName>Cytochrome b6-f-associated phosphoprotein</fullName>
    </alternativeName>
</protein>
<accession>Q9LLC6</accession>
<dbReference type="EMBL" id="AF222893">
    <property type="protein sequence ID" value="AAF74115.1"/>
    <property type="molecule type" value="mRNA"/>
</dbReference>
<dbReference type="RefSeq" id="XP_001702816.1">
    <property type="nucleotide sequence ID" value="XM_001702764.1"/>
</dbReference>
<dbReference type="PaxDb" id="3055-EDO96861"/>
<dbReference type="ProMEX" id="Q9LLC6"/>
<dbReference type="EnsemblPlants" id="PNW75831">
    <property type="protein sequence ID" value="PNW75831"/>
    <property type="gene ID" value="CHLRE_12g558900v5"/>
</dbReference>
<dbReference type="Gramene" id="PNW75831">
    <property type="protein sequence ID" value="PNW75831"/>
    <property type="gene ID" value="CHLRE_12g558900v5"/>
</dbReference>
<dbReference type="KEGG" id="cre:CHLRE_12g558900v5"/>
<dbReference type="HOGENOM" id="CLU_1379887_0_0_1"/>
<dbReference type="OMA" id="AHKGAFE"/>
<dbReference type="OrthoDB" id="535864at2759"/>
<dbReference type="GO" id="GO:0009535">
    <property type="term" value="C:chloroplast thylakoid membrane"/>
    <property type="evidence" value="ECO:0000314"/>
    <property type="project" value="UniProtKB"/>
</dbReference>
<dbReference type="GO" id="GO:0009512">
    <property type="term" value="C:cytochrome b6f complex"/>
    <property type="evidence" value="ECO:0000314"/>
    <property type="project" value="UniProtKB"/>
</dbReference>
<dbReference type="GO" id="GO:0009767">
    <property type="term" value="P:photosynthetic electron transport chain"/>
    <property type="evidence" value="ECO:0000303"/>
    <property type="project" value="UniProtKB"/>
</dbReference>
<dbReference type="CDD" id="cd22950">
    <property type="entry name" value="petO"/>
    <property type="match status" value="1"/>
</dbReference>
<name>PETO_CHLRE</name>
<sequence>MALRCKTPAATCAARSRRSVRVSAHKGAFEQAQVAAAAFVAAAVIAAPANAGVVLQQPVLKKAFQDDTPAAPPPKREFRGLAPPALPQSDAPNVAAEKPKKAEVVESTSGGLDPRSVALPGALALTIGGFVAASKIDGSFNDWFMEAVVRDSNNYAGYEATLKSENGVTFPKVAAGGTKKVKAATGSKKGGFPFGGKK</sequence>
<comment type="function">
    <text evidence="5">The cytochrome b6-f complex functions in the linear cross-membrane transport of electrons between photosystem II and I, as well as in cyclic electron flow around photosystem I.</text>
</comment>
<comment type="subcellular location">
    <subcellularLocation>
        <location evidence="3 4">Plastid</location>
        <location evidence="3 4">Chloroplast thylakoid membrane</location>
    </subcellularLocation>
</comment>
<comment type="PTM">
    <text evidence="3">Phosphorylated.</text>
</comment>
<comment type="similarity">
    <text evidence="5">Belongs to the petO family.</text>
</comment>
<proteinExistence type="evidence at protein level"/>
<gene>
    <name type="primary">PETO</name>
</gene>
<evidence type="ECO:0000255" key="1"/>
<evidence type="ECO:0000256" key="2">
    <source>
        <dbReference type="SAM" id="MobiDB-lite"/>
    </source>
</evidence>
<evidence type="ECO:0000269" key="3">
    <source>
    </source>
</evidence>
<evidence type="ECO:0000269" key="4">
    <source ref="2"/>
</evidence>
<evidence type="ECO:0000305" key="5"/>
<evidence type="ECO:0000312" key="6">
    <source>
        <dbReference type="EMBL" id="AAF74115.1"/>
    </source>
</evidence>
<keyword id="KW-0150">Chloroplast</keyword>
<keyword id="KW-0903">Direct protein sequencing</keyword>
<keyword id="KW-0249">Electron transport</keyword>
<keyword id="KW-0472">Membrane</keyword>
<keyword id="KW-0597">Phosphoprotein</keyword>
<keyword id="KW-0934">Plastid</keyword>
<keyword id="KW-0679">Respiratory chain</keyword>
<keyword id="KW-0793">Thylakoid</keyword>
<keyword id="KW-0809">Transit peptide</keyword>
<keyword id="KW-0812">Transmembrane</keyword>
<keyword id="KW-1133">Transmembrane helix</keyword>
<keyword id="KW-0813">Transport</keyword>
<feature type="transit peptide" description="Chloroplast" evidence="3">
    <location>
        <begin position="1"/>
        <end position="51"/>
    </location>
</feature>
<feature type="chain" id="PRO_0000023865" description="Cytochrome b6-f complex subunit petO, chloroplastic">
    <location>
        <begin position="52"/>
        <end position="198"/>
    </location>
</feature>
<feature type="topological domain" description="Lumenal" evidence="1">
    <location>
        <begin position="52"/>
        <end position="115"/>
    </location>
</feature>
<feature type="transmembrane region" description="Helical" evidence="1">
    <location>
        <begin position="116"/>
        <end position="136"/>
    </location>
</feature>
<feature type="topological domain" description="Stromal" evidence="1">
    <location>
        <begin position="137"/>
        <end position="198"/>
    </location>
</feature>
<feature type="region of interest" description="Disordered" evidence="2">
    <location>
        <begin position="65"/>
        <end position="111"/>
    </location>
</feature>